<feature type="chain" id="PRO_1000009673" description="dCTP deaminase">
    <location>
        <begin position="1"/>
        <end position="193"/>
    </location>
</feature>
<feature type="active site" description="Proton donor/acceptor" evidence="1">
    <location>
        <position position="138"/>
    </location>
</feature>
<feature type="binding site" evidence="1">
    <location>
        <begin position="110"/>
        <end position="115"/>
    </location>
    <ligand>
        <name>dCTP</name>
        <dbReference type="ChEBI" id="CHEBI:61481"/>
    </ligand>
</feature>
<feature type="binding site" evidence="1">
    <location>
        <position position="128"/>
    </location>
    <ligand>
        <name>dCTP</name>
        <dbReference type="ChEBI" id="CHEBI:61481"/>
    </ligand>
</feature>
<feature type="binding site" evidence="1">
    <location>
        <begin position="136"/>
        <end position="138"/>
    </location>
    <ligand>
        <name>dCTP</name>
        <dbReference type="ChEBI" id="CHEBI:61481"/>
    </ligand>
</feature>
<feature type="binding site" evidence="1">
    <location>
        <position position="171"/>
    </location>
    <ligand>
        <name>dCTP</name>
        <dbReference type="ChEBI" id="CHEBI:61481"/>
    </ligand>
</feature>
<feature type="binding site" evidence="1">
    <location>
        <position position="178"/>
    </location>
    <ligand>
        <name>dCTP</name>
        <dbReference type="ChEBI" id="CHEBI:61481"/>
    </ligand>
</feature>
<feature type="binding site" evidence="1">
    <location>
        <position position="182"/>
    </location>
    <ligand>
        <name>dCTP</name>
        <dbReference type="ChEBI" id="CHEBI:61481"/>
    </ligand>
</feature>
<organism>
    <name type="scientific">Aeromonas hydrophila subsp. hydrophila (strain ATCC 7966 / DSM 30187 / BCRC 13018 / CCUG 14551 / JCM 1027 / KCTC 2358 / NCIMB 9240 / NCTC 8049)</name>
    <dbReference type="NCBI Taxonomy" id="380703"/>
    <lineage>
        <taxon>Bacteria</taxon>
        <taxon>Pseudomonadati</taxon>
        <taxon>Pseudomonadota</taxon>
        <taxon>Gammaproteobacteria</taxon>
        <taxon>Aeromonadales</taxon>
        <taxon>Aeromonadaceae</taxon>
        <taxon>Aeromonas</taxon>
    </lineage>
</organism>
<sequence>MRLCDTDIERHLDEGKIVIEPRPGIERISGVSVDVLLGNEFRVFRDHTAPYIDLSGPSSEMADAIDRVMSDEIHVPDGEAFYLHPGQLALAVTYESVTLPADIVGWLDGRSSLARLGLMVHVTAHRIDPGWSGRIVLEFYNGGKLPLALRPKMKIGALNFEMLSGVAARPYNKRENAKYKSQQGAVASRINQD</sequence>
<protein>
    <recommendedName>
        <fullName evidence="1">dCTP deaminase</fullName>
        <ecNumber evidence="1">3.5.4.13</ecNumber>
    </recommendedName>
    <alternativeName>
        <fullName evidence="1">Deoxycytidine triphosphate deaminase</fullName>
    </alternativeName>
</protein>
<proteinExistence type="inferred from homology"/>
<dbReference type="EC" id="3.5.4.13" evidence="1"/>
<dbReference type="EMBL" id="CP000462">
    <property type="protein sequence ID" value="ABK39073.1"/>
    <property type="molecule type" value="Genomic_DNA"/>
</dbReference>
<dbReference type="RefSeq" id="WP_011706092.1">
    <property type="nucleotide sequence ID" value="NC_008570.1"/>
</dbReference>
<dbReference type="RefSeq" id="YP_856760.1">
    <property type="nucleotide sequence ID" value="NC_008570.1"/>
</dbReference>
<dbReference type="SMR" id="A0KKF9"/>
<dbReference type="STRING" id="380703.AHA_2236"/>
<dbReference type="EnsemblBacteria" id="ABK39073">
    <property type="protein sequence ID" value="ABK39073"/>
    <property type="gene ID" value="AHA_2236"/>
</dbReference>
<dbReference type="GeneID" id="4489275"/>
<dbReference type="KEGG" id="aha:AHA_2236"/>
<dbReference type="PATRIC" id="fig|380703.7.peg.2237"/>
<dbReference type="eggNOG" id="COG0717">
    <property type="taxonomic scope" value="Bacteria"/>
</dbReference>
<dbReference type="HOGENOM" id="CLU_087476_2_0_6"/>
<dbReference type="OrthoDB" id="9780956at2"/>
<dbReference type="UniPathway" id="UPA00610">
    <property type="reaction ID" value="UER00665"/>
</dbReference>
<dbReference type="Proteomes" id="UP000000756">
    <property type="component" value="Chromosome"/>
</dbReference>
<dbReference type="GO" id="GO:0008829">
    <property type="term" value="F:dCTP deaminase activity"/>
    <property type="evidence" value="ECO:0007669"/>
    <property type="project" value="UniProtKB-UniRule"/>
</dbReference>
<dbReference type="GO" id="GO:0000166">
    <property type="term" value="F:nucleotide binding"/>
    <property type="evidence" value="ECO:0007669"/>
    <property type="project" value="UniProtKB-KW"/>
</dbReference>
<dbReference type="GO" id="GO:0006226">
    <property type="term" value="P:dUMP biosynthetic process"/>
    <property type="evidence" value="ECO:0007669"/>
    <property type="project" value="UniProtKB-UniPathway"/>
</dbReference>
<dbReference type="GO" id="GO:0006229">
    <property type="term" value="P:dUTP biosynthetic process"/>
    <property type="evidence" value="ECO:0007669"/>
    <property type="project" value="UniProtKB-UniRule"/>
</dbReference>
<dbReference type="GO" id="GO:0015949">
    <property type="term" value="P:nucleobase-containing small molecule interconversion"/>
    <property type="evidence" value="ECO:0007669"/>
    <property type="project" value="TreeGrafter"/>
</dbReference>
<dbReference type="CDD" id="cd07557">
    <property type="entry name" value="trimeric_dUTPase"/>
    <property type="match status" value="1"/>
</dbReference>
<dbReference type="FunFam" id="2.70.40.10:FF:000003">
    <property type="entry name" value="dCTP deaminase"/>
    <property type="match status" value="1"/>
</dbReference>
<dbReference type="Gene3D" id="2.70.40.10">
    <property type="match status" value="1"/>
</dbReference>
<dbReference type="HAMAP" id="MF_00146">
    <property type="entry name" value="dCTP_deaminase"/>
    <property type="match status" value="1"/>
</dbReference>
<dbReference type="InterPro" id="IPR011962">
    <property type="entry name" value="dCTP_deaminase"/>
</dbReference>
<dbReference type="InterPro" id="IPR036157">
    <property type="entry name" value="dUTPase-like_sf"/>
</dbReference>
<dbReference type="InterPro" id="IPR033704">
    <property type="entry name" value="dUTPase_trimeric"/>
</dbReference>
<dbReference type="NCBIfam" id="TIGR02274">
    <property type="entry name" value="dCTP_deam"/>
    <property type="match status" value="1"/>
</dbReference>
<dbReference type="PANTHER" id="PTHR42680">
    <property type="entry name" value="DCTP DEAMINASE"/>
    <property type="match status" value="1"/>
</dbReference>
<dbReference type="PANTHER" id="PTHR42680:SF3">
    <property type="entry name" value="DCTP DEAMINASE"/>
    <property type="match status" value="1"/>
</dbReference>
<dbReference type="Pfam" id="PF22769">
    <property type="entry name" value="DCD"/>
    <property type="match status" value="1"/>
</dbReference>
<dbReference type="SUPFAM" id="SSF51283">
    <property type="entry name" value="dUTPase-like"/>
    <property type="match status" value="1"/>
</dbReference>
<keyword id="KW-0378">Hydrolase</keyword>
<keyword id="KW-0546">Nucleotide metabolism</keyword>
<keyword id="KW-0547">Nucleotide-binding</keyword>
<keyword id="KW-1185">Reference proteome</keyword>
<reference key="1">
    <citation type="journal article" date="2006" name="J. Bacteriol.">
        <title>Genome sequence of Aeromonas hydrophila ATCC 7966T: jack of all trades.</title>
        <authorList>
            <person name="Seshadri R."/>
            <person name="Joseph S.W."/>
            <person name="Chopra A.K."/>
            <person name="Sha J."/>
            <person name="Shaw J."/>
            <person name="Graf J."/>
            <person name="Haft D.H."/>
            <person name="Wu M."/>
            <person name="Ren Q."/>
            <person name="Rosovitz M.J."/>
            <person name="Madupu R."/>
            <person name="Tallon L."/>
            <person name="Kim M."/>
            <person name="Jin S."/>
            <person name="Vuong H."/>
            <person name="Stine O.C."/>
            <person name="Ali A."/>
            <person name="Horneman A.J."/>
            <person name="Heidelberg J.F."/>
        </authorList>
    </citation>
    <scope>NUCLEOTIDE SEQUENCE [LARGE SCALE GENOMIC DNA]</scope>
    <source>
        <strain>ATCC 7966 / DSM 30187 / BCRC 13018 / CCUG 14551 / JCM 1027 / KCTC 2358 / NCIMB 9240 / NCTC 8049</strain>
    </source>
</reference>
<comment type="function">
    <text evidence="1">Catalyzes the deamination of dCTP to dUTP.</text>
</comment>
<comment type="catalytic activity">
    <reaction evidence="1">
        <text>dCTP + H2O + H(+) = dUTP + NH4(+)</text>
        <dbReference type="Rhea" id="RHEA:22680"/>
        <dbReference type="ChEBI" id="CHEBI:15377"/>
        <dbReference type="ChEBI" id="CHEBI:15378"/>
        <dbReference type="ChEBI" id="CHEBI:28938"/>
        <dbReference type="ChEBI" id="CHEBI:61481"/>
        <dbReference type="ChEBI" id="CHEBI:61555"/>
        <dbReference type="EC" id="3.5.4.13"/>
    </reaction>
</comment>
<comment type="pathway">
    <text evidence="1">Pyrimidine metabolism; dUMP biosynthesis; dUMP from dCTP (dUTP route): step 1/2.</text>
</comment>
<comment type="subunit">
    <text evidence="1">Homotrimer.</text>
</comment>
<comment type="similarity">
    <text evidence="1">Belongs to the dCTP deaminase family.</text>
</comment>
<gene>
    <name evidence="1" type="primary">dcd</name>
    <name type="ordered locus">AHA_2236</name>
</gene>
<name>DCD_AERHH</name>
<accession>A0KKF9</accession>
<evidence type="ECO:0000255" key="1">
    <source>
        <dbReference type="HAMAP-Rule" id="MF_00146"/>
    </source>
</evidence>